<name>RPOB_BRUC2</name>
<evidence type="ECO:0000255" key="1">
    <source>
        <dbReference type="HAMAP-Rule" id="MF_01321"/>
    </source>
</evidence>
<gene>
    <name evidence="1" type="primary">rpoB</name>
    <name type="ordered locus">BCAN_A1266</name>
</gene>
<keyword id="KW-0240">DNA-directed RNA polymerase</keyword>
<keyword id="KW-0548">Nucleotidyltransferase</keyword>
<keyword id="KW-1185">Reference proteome</keyword>
<keyword id="KW-0804">Transcription</keyword>
<keyword id="KW-0808">Transferase</keyword>
<protein>
    <recommendedName>
        <fullName evidence="1">DNA-directed RNA polymerase subunit beta</fullName>
        <shortName evidence="1">RNAP subunit beta</shortName>
        <ecNumber evidence="1">2.7.7.6</ecNumber>
    </recommendedName>
    <alternativeName>
        <fullName evidence="1">RNA polymerase subunit beta</fullName>
    </alternativeName>
    <alternativeName>
        <fullName evidence="1">Transcriptase subunit beta</fullName>
    </alternativeName>
</protein>
<reference key="1">
    <citation type="submission" date="2007-10" db="EMBL/GenBank/DDBJ databases">
        <title>Brucella canis ATCC 23365 whole genome shotgun sequencing project.</title>
        <authorList>
            <person name="Setubal J.C."/>
            <person name="Bowns C."/>
            <person name="Boyle S."/>
            <person name="Crasta O.R."/>
            <person name="Czar M.J."/>
            <person name="Dharmanolla C."/>
            <person name="Gillespie J.J."/>
            <person name="Kenyon R.W."/>
            <person name="Lu J."/>
            <person name="Mane S."/>
            <person name="Mohapatra S."/>
            <person name="Nagrani S."/>
            <person name="Purkayastha A."/>
            <person name="Rajasimha H.K."/>
            <person name="Shallom J.M."/>
            <person name="Shallom S."/>
            <person name="Shukla M."/>
            <person name="Snyder E.E."/>
            <person name="Sobral B.W."/>
            <person name="Wattam A.R."/>
            <person name="Will R."/>
            <person name="Williams K."/>
            <person name="Yoo H."/>
            <person name="Bruce D."/>
            <person name="Detter C."/>
            <person name="Munk C."/>
            <person name="Brettin T.S."/>
        </authorList>
    </citation>
    <scope>NUCLEOTIDE SEQUENCE [LARGE SCALE GENOMIC DNA]</scope>
    <source>
        <strain>ATCC 23365 / NCTC 10854 / RM-666</strain>
    </source>
</reference>
<dbReference type="EC" id="2.7.7.6" evidence="1"/>
<dbReference type="EMBL" id="CP000872">
    <property type="protein sequence ID" value="ABX62315.1"/>
    <property type="molecule type" value="Genomic_DNA"/>
</dbReference>
<dbReference type="RefSeq" id="WP_004691707.1">
    <property type="nucleotide sequence ID" value="NC_010103.1"/>
</dbReference>
<dbReference type="SMR" id="A9M5R0"/>
<dbReference type="GeneID" id="55590916"/>
<dbReference type="KEGG" id="bcs:BCAN_A1266"/>
<dbReference type="HOGENOM" id="CLU_000524_4_0_5"/>
<dbReference type="PhylomeDB" id="A9M5R0"/>
<dbReference type="PRO" id="PR:A9M5R0"/>
<dbReference type="Proteomes" id="UP000001385">
    <property type="component" value="Chromosome I"/>
</dbReference>
<dbReference type="GO" id="GO:0000428">
    <property type="term" value="C:DNA-directed RNA polymerase complex"/>
    <property type="evidence" value="ECO:0007669"/>
    <property type="project" value="UniProtKB-KW"/>
</dbReference>
<dbReference type="GO" id="GO:0003677">
    <property type="term" value="F:DNA binding"/>
    <property type="evidence" value="ECO:0007669"/>
    <property type="project" value="UniProtKB-UniRule"/>
</dbReference>
<dbReference type="GO" id="GO:0003899">
    <property type="term" value="F:DNA-directed RNA polymerase activity"/>
    <property type="evidence" value="ECO:0007669"/>
    <property type="project" value="UniProtKB-UniRule"/>
</dbReference>
<dbReference type="GO" id="GO:0032549">
    <property type="term" value="F:ribonucleoside binding"/>
    <property type="evidence" value="ECO:0007669"/>
    <property type="project" value="InterPro"/>
</dbReference>
<dbReference type="GO" id="GO:0006351">
    <property type="term" value="P:DNA-templated transcription"/>
    <property type="evidence" value="ECO:0007669"/>
    <property type="project" value="UniProtKB-UniRule"/>
</dbReference>
<dbReference type="CDD" id="cd00653">
    <property type="entry name" value="RNA_pol_B_RPB2"/>
    <property type="match status" value="1"/>
</dbReference>
<dbReference type="FunFam" id="2.40.50.100:FF:000006">
    <property type="entry name" value="DNA-directed RNA polymerase subunit beta"/>
    <property type="match status" value="1"/>
</dbReference>
<dbReference type="FunFam" id="3.90.1800.10:FF:000001">
    <property type="entry name" value="DNA-directed RNA polymerase subunit beta"/>
    <property type="match status" value="1"/>
</dbReference>
<dbReference type="Gene3D" id="2.40.50.100">
    <property type="match status" value="1"/>
</dbReference>
<dbReference type="Gene3D" id="2.40.50.150">
    <property type="match status" value="1"/>
</dbReference>
<dbReference type="Gene3D" id="3.90.1100.10">
    <property type="match status" value="2"/>
</dbReference>
<dbReference type="Gene3D" id="2.30.150.10">
    <property type="entry name" value="DNA-directed RNA polymerase, beta subunit, external 1 domain"/>
    <property type="match status" value="1"/>
</dbReference>
<dbReference type="Gene3D" id="2.40.270.10">
    <property type="entry name" value="DNA-directed RNA polymerase, subunit 2, domain 6"/>
    <property type="match status" value="1"/>
</dbReference>
<dbReference type="Gene3D" id="3.90.1800.10">
    <property type="entry name" value="RNA polymerase alpha subunit dimerisation domain"/>
    <property type="match status" value="1"/>
</dbReference>
<dbReference type="Gene3D" id="3.90.1110.10">
    <property type="entry name" value="RNA polymerase Rpb2, domain 2"/>
    <property type="match status" value="1"/>
</dbReference>
<dbReference type="HAMAP" id="MF_01321">
    <property type="entry name" value="RNApol_bact_RpoB"/>
    <property type="match status" value="1"/>
</dbReference>
<dbReference type="InterPro" id="IPR042107">
    <property type="entry name" value="DNA-dir_RNA_pol_bsu_ext_1_sf"/>
</dbReference>
<dbReference type="InterPro" id="IPR019462">
    <property type="entry name" value="DNA-dir_RNA_pol_bsu_external_1"/>
</dbReference>
<dbReference type="InterPro" id="IPR015712">
    <property type="entry name" value="DNA-dir_RNA_pol_su2"/>
</dbReference>
<dbReference type="InterPro" id="IPR007120">
    <property type="entry name" value="DNA-dir_RNAP_su2_dom"/>
</dbReference>
<dbReference type="InterPro" id="IPR037033">
    <property type="entry name" value="DNA-dir_RNAP_su2_hyb_sf"/>
</dbReference>
<dbReference type="InterPro" id="IPR010243">
    <property type="entry name" value="RNA_pol_bsu_bac"/>
</dbReference>
<dbReference type="InterPro" id="IPR007121">
    <property type="entry name" value="RNA_pol_bsu_CS"/>
</dbReference>
<dbReference type="InterPro" id="IPR007644">
    <property type="entry name" value="RNA_pol_bsu_protrusion"/>
</dbReference>
<dbReference type="InterPro" id="IPR007642">
    <property type="entry name" value="RNA_pol_Rpb2_2"/>
</dbReference>
<dbReference type="InterPro" id="IPR037034">
    <property type="entry name" value="RNA_pol_Rpb2_2_sf"/>
</dbReference>
<dbReference type="InterPro" id="IPR007645">
    <property type="entry name" value="RNA_pol_Rpb2_3"/>
</dbReference>
<dbReference type="InterPro" id="IPR007641">
    <property type="entry name" value="RNA_pol_Rpb2_7"/>
</dbReference>
<dbReference type="InterPro" id="IPR014724">
    <property type="entry name" value="RNA_pol_RPB2_OB-fold"/>
</dbReference>
<dbReference type="NCBIfam" id="NF001616">
    <property type="entry name" value="PRK00405.1"/>
    <property type="match status" value="1"/>
</dbReference>
<dbReference type="NCBIfam" id="TIGR02013">
    <property type="entry name" value="rpoB"/>
    <property type="match status" value="1"/>
</dbReference>
<dbReference type="PANTHER" id="PTHR20856">
    <property type="entry name" value="DNA-DIRECTED RNA POLYMERASE I SUBUNIT 2"/>
    <property type="match status" value="1"/>
</dbReference>
<dbReference type="Pfam" id="PF04563">
    <property type="entry name" value="RNA_pol_Rpb2_1"/>
    <property type="match status" value="1"/>
</dbReference>
<dbReference type="Pfam" id="PF04561">
    <property type="entry name" value="RNA_pol_Rpb2_2"/>
    <property type="match status" value="2"/>
</dbReference>
<dbReference type="Pfam" id="PF04565">
    <property type="entry name" value="RNA_pol_Rpb2_3"/>
    <property type="match status" value="1"/>
</dbReference>
<dbReference type="Pfam" id="PF10385">
    <property type="entry name" value="RNA_pol_Rpb2_45"/>
    <property type="match status" value="1"/>
</dbReference>
<dbReference type="Pfam" id="PF00562">
    <property type="entry name" value="RNA_pol_Rpb2_6"/>
    <property type="match status" value="1"/>
</dbReference>
<dbReference type="Pfam" id="PF04560">
    <property type="entry name" value="RNA_pol_Rpb2_7"/>
    <property type="match status" value="1"/>
</dbReference>
<dbReference type="SUPFAM" id="SSF64484">
    <property type="entry name" value="beta and beta-prime subunits of DNA dependent RNA-polymerase"/>
    <property type="match status" value="1"/>
</dbReference>
<dbReference type="PROSITE" id="PS01166">
    <property type="entry name" value="RNA_POL_BETA"/>
    <property type="match status" value="1"/>
</dbReference>
<feature type="chain" id="PRO_1000086362" description="DNA-directed RNA polymerase subunit beta">
    <location>
        <begin position="1"/>
        <end position="1377"/>
    </location>
</feature>
<sequence length="1377" mass="153683">MAQTHSFNGRKRVRKFFGKIPEVAEMPNLIEVQKASYDQFLMVEEPSGGRPDEGLQAVFKSVFPIQDFSGASMLEFVRYEFDPPKFDVDECRQRDLTYSAPLKVTLRLIVFDIDEDTGAKSIKDIKEQDVYMGDMPLMTDNGTFIVNGTERVIVSQMHRSPGVFFDHDKGKTHSSGKLLFAARVIPYRGSWLDIEFDSKDIVYARIDRRRKLPATTLLMALGMDGEEILSTFYKTVTYTRDGDNWRIPYSAERFKGMKIISDLVDADTGEVVLEAGKKLTARAAKQLAEKGLKAIKATEDDLFGSYLAEDVVNYATGEIYLEAGDEIDEKVLKTLIDTGETEINVLDIDHVNIGAYIRNTLAVDKNESRQEALFDIYRVMRPGEPPTMDSAEAMFHSLFFDSERYDLSAVGRVKMNMRLDLDAEDTVRVLRKEDILAVVKMLVELRDGRGEIDDIDNLGNRRVRSVGELMENQYRVGLLRMERAIKERMSSIEIDTVMPQDLINAKPAAAAVREFFGSSQLSQFMDQTNPLSEITHKRRLSALGPGGLTRERAGFEVRDVHPTHYGRICPIETPEGPNIGLINSLATFARVNKYGFIESPYRKVVDGKVTNDVVYLSAMEEAKHSIAQANVELDEQGGFVDEFVICRHAGEVMMAPRENVDLMDVSPKQLVSVAAALIPFLENDDANRALMGSNMQRQAVPLVRAEAPFVGTGMEPIVARDSGAAIAARRGGIVDQVDATRIVIRATEELDPSKSGVDIYRLQKFQRSNQSTCINQRPLVRVGDRIHKGDIIADGPSTDLGDLALGRNVLVAFMPWNGYNYEDSILLSEKIVSDDVFTSIHIEEFEVAARDTKLGPEEITRDIPNVSEEALKNLDEAGIVYIGAEVHPGDILVGKITPKGESPMTPEEKLLRAIFGEKASDVRDTSMRMPPGTYGTVVEVRVFNRHGVEKDERAMAIEREEIERLAKDRDDEQAILDRNVYGRLADMIDGKVAAAGPKGFKKGTTITRELMTEYPRSQWWQFAVEDEKLQGELEALRSQYDDSKKLLEARFMDKVEKVQRGDEMPPGVMKMVKVFVAVKRKIQPGDKMAGRHGNKGVVSRILPVEDMPFLEDGTHADIVLNPLGVPSRMNVGQILETHLGWACAGMGKKIGELLDVYRKTANIEPLRQTLEHIYPDNDRNEPVRSYDDDAILMLANQVKRGVSIATPVFDGAVEADINAMLTDAGLATSGQSTLYDGRTGEPFDRQVTMGYIYMLKLHHLVDDKIHARSIGPYSLVTQQPLGGKAQFGGQRFGEMEVWALEAYGAAYTLQEMLTVKSDDVAGRTKVYEAIVRGDDTFEAGIPESFNVLVKEMRSLGLNVELDDTREAEQPALPDAAE</sequence>
<organism>
    <name type="scientific">Brucella canis (strain ATCC 23365 / NCTC 10854 / RM-666)</name>
    <dbReference type="NCBI Taxonomy" id="483179"/>
    <lineage>
        <taxon>Bacteria</taxon>
        <taxon>Pseudomonadati</taxon>
        <taxon>Pseudomonadota</taxon>
        <taxon>Alphaproteobacteria</taxon>
        <taxon>Hyphomicrobiales</taxon>
        <taxon>Brucellaceae</taxon>
        <taxon>Brucella/Ochrobactrum group</taxon>
        <taxon>Brucella</taxon>
    </lineage>
</organism>
<proteinExistence type="inferred from homology"/>
<comment type="function">
    <text evidence="1">DNA-dependent RNA polymerase catalyzes the transcription of DNA into RNA using the four ribonucleoside triphosphates as substrates.</text>
</comment>
<comment type="catalytic activity">
    <reaction evidence="1">
        <text>RNA(n) + a ribonucleoside 5'-triphosphate = RNA(n+1) + diphosphate</text>
        <dbReference type="Rhea" id="RHEA:21248"/>
        <dbReference type="Rhea" id="RHEA-COMP:14527"/>
        <dbReference type="Rhea" id="RHEA-COMP:17342"/>
        <dbReference type="ChEBI" id="CHEBI:33019"/>
        <dbReference type="ChEBI" id="CHEBI:61557"/>
        <dbReference type="ChEBI" id="CHEBI:140395"/>
        <dbReference type="EC" id="2.7.7.6"/>
    </reaction>
</comment>
<comment type="subunit">
    <text evidence="1">The RNAP catalytic core consists of 2 alpha, 1 beta, 1 beta' and 1 omega subunit. When a sigma factor is associated with the core the holoenzyme is formed, which can initiate transcription.</text>
</comment>
<comment type="similarity">
    <text evidence="1">Belongs to the RNA polymerase beta chain family.</text>
</comment>
<accession>A9M5R0</accession>